<feature type="chain" id="PRO_0000126271" description="Large ribosomal subunit protein bL36">
    <location>
        <begin position="1"/>
        <end position="38"/>
    </location>
</feature>
<sequence length="38" mass="4451">MKVRPSVKPICEYCKVIRRNGRVMVICPTNPKHKQRQG</sequence>
<comment type="similarity">
    <text evidence="1">Belongs to the bacterial ribosomal protein bL36 family.</text>
</comment>
<dbReference type="EMBL" id="AE014074">
    <property type="protein sequence ID" value="AAM78670.1"/>
    <property type="molecule type" value="Genomic_DNA"/>
</dbReference>
<dbReference type="RefSeq" id="WP_000868345.1">
    <property type="nucleotide sequence ID" value="NC_004070.1"/>
</dbReference>
<dbReference type="SMR" id="P0DE50"/>
<dbReference type="GeneID" id="93860206"/>
<dbReference type="KEGG" id="spg:SpyM3_0063"/>
<dbReference type="HOGENOM" id="CLU_135723_6_2_9"/>
<dbReference type="Proteomes" id="UP000000564">
    <property type="component" value="Chromosome"/>
</dbReference>
<dbReference type="GO" id="GO:0005737">
    <property type="term" value="C:cytoplasm"/>
    <property type="evidence" value="ECO:0007669"/>
    <property type="project" value="UniProtKB-ARBA"/>
</dbReference>
<dbReference type="GO" id="GO:1990904">
    <property type="term" value="C:ribonucleoprotein complex"/>
    <property type="evidence" value="ECO:0007669"/>
    <property type="project" value="UniProtKB-KW"/>
</dbReference>
<dbReference type="GO" id="GO:0005840">
    <property type="term" value="C:ribosome"/>
    <property type="evidence" value="ECO:0007669"/>
    <property type="project" value="UniProtKB-KW"/>
</dbReference>
<dbReference type="GO" id="GO:0003735">
    <property type="term" value="F:structural constituent of ribosome"/>
    <property type="evidence" value="ECO:0007669"/>
    <property type="project" value="InterPro"/>
</dbReference>
<dbReference type="GO" id="GO:0006412">
    <property type="term" value="P:translation"/>
    <property type="evidence" value="ECO:0007669"/>
    <property type="project" value="UniProtKB-UniRule"/>
</dbReference>
<dbReference type="HAMAP" id="MF_00251">
    <property type="entry name" value="Ribosomal_bL36"/>
    <property type="match status" value="1"/>
</dbReference>
<dbReference type="InterPro" id="IPR000473">
    <property type="entry name" value="Ribosomal_bL36"/>
</dbReference>
<dbReference type="InterPro" id="IPR035977">
    <property type="entry name" value="Ribosomal_bL36_sp"/>
</dbReference>
<dbReference type="NCBIfam" id="TIGR01022">
    <property type="entry name" value="rpmJ_bact"/>
    <property type="match status" value="1"/>
</dbReference>
<dbReference type="PANTHER" id="PTHR42888">
    <property type="entry name" value="50S RIBOSOMAL PROTEIN L36, CHLOROPLASTIC"/>
    <property type="match status" value="1"/>
</dbReference>
<dbReference type="PANTHER" id="PTHR42888:SF1">
    <property type="entry name" value="LARGE RIBOSOMAL SUBUNIT PROTEIN BL36C"/>
    <property type="match status" value="1"/>
</dbReference>
<dbReference type="Pfam" id="PF00444">
    <property type="entry name" value="Ribosomal_L36"/>
    <property type="match status" value="1"/>
</dbReference>
<dbReference type="SUPFAM" id="SSF57840">
    <property type="entry name" value="Ribosomal protein L36"/>
    <property type="match status" value="1"/>
</dbReference>
<dbReference type="PROSITE" id="PS00828">
    <property type="entry name" value="RIBOSOMAL_L36"/>
    <property type="match status" value="1"/>
</dbReference>
<reference key="1">
    <citation type="journal article" date="2002" name="Proc. Natl. Acad. Sci. U.S.A.">
        <title>Genome sequence of a serotype M3 strain of group A Streptococcus: phage-encoded toxins, the high-virulence phenotype, and clone emergence.</title>
        <authorList>
            <person name="Beres S.B."/>
            <person name="Sylva G.L."/>
            <person name="Barbian K.D."/>
            <person name="Lei B."/>
            <person name="Hoff J.S."/>
            <person name="Mammarella N.D."/>
            <person name="Liu M.-Y."/>
            <person name="Smoot J.C."/>
            <person name="Porcella S.F."/>
            <person name="Parkins L.D."/>
            <person name="Campbell D.S."/>
            <person name="Smith T.M."/>
            <person name="McCormick J.K."/>
            <person name="Leung D.Y.M."/>
            <person name="Schlievert P.M."/>
            <person name="Musser J.M."/>
        </authorList>
    </citation>
    <scope>NUCLEOTIDE SEQUENCE [LARGE SCALE GENOMIC DNA]</scope>
    <source>
        <strain>ATCC BAA-595 / MGAS315</strain>
    </source>
</reference>
<name>RL36_STRP3</name>
<keyword id="KW-0687">Ribonucleoprotein</keyword>
<keyword id="KW-0689">Ribosomal protein</keyword>
<evidence type="ECO:0000255" key="1">
    <source>
        <dbReference type="HAMAP-Rule" id="MF_00251"/>
    </source>
</evidence>
<evidence type="ECO:0000305" key="2"/>
<proteinExistence type="inferred from homology"/>
<protein>
    <recommendedName>
        <fullName evidence="1">Large ribosomal subunit protein bL36</fullName>
    </recommendedName>
    <alternativeName>
        <fullName evidence="2">50S ribosomal protein L36</fullName>
    </alternativeName>
</protein>
<gene>
    <name evidence="1" type="primary">rpmJ</name>
    <name type="ordered locus">SpyM3_0063</name>
</gene>
<organism>
    <name type="scientific">Streptococcus pyogenes serotype M3 (strain ATCC BAA-595 / MGAS315)</name>
    <dbReference type="NCBI Taxonomy" id="198466"/>
    <lineage>
        <taxon>Bacteria</taxon>
        <taxon>Bacillati</taxon>
        <taxon>Bacillota</taxon>
        <taxon>Bacilli</taxon>
        <taxon>Lactobacillales</taxon>
        <taxon>Streptococcaceae</taxon>
        <taxon>Streptococcus</taxon>
    </lineage>
</organism>
<accession>P0DE50</accession>
<accession>P66304</accession>
<accession>Q9A1V2</accession>